<feature type="signal peptide" evidence="2">
    <location>
        <begin position="1"/>
        <end position="21"/>
    </location>
</feature>
<feature type="propeptide" id="PRO_0000400530" evidence="1">
    <location>
        <begin position="22"/>
        <end position="48"/>
    </location>
</feature>
<feature type="peptide" id="PRO_0000400531" description="Mu-theraphotoxin-Hhn2j 2">
    <location>
        <begin position="49"/>
        <end position="81"/>
    </location>
</feature>
<feature type="modified residue" description="Leucine amide" evidence="1">
    <location>
        <position position="81"/>
    </location>
</feature>
<feature type="disulfide bond" evidence="1">
    <location>
        <begin position="50"/>
        <end position="65"/>
    </location>
</feature>
<feature type="disulfide bond" evidence="1">
    <location>
        <begin position="57"/>
        <end position="70"/>
    </location>
</feature>
<feature type="disulfide bond" evidence="1">
    <location>
        <begin position="64"/>
        <end position="77"/>
    </location>
</feature>
<protein>
    <recommendedName>
        <fullName>Mu-theraphotoxin-Hhn2j 2</fullName>
        <shortName>Mu-TRTX-Hhn2j</shortName>
    </recommendedName>
    <alternativeName>
        <fullName>Hainantoxin-III-2.2</fullName>
        <shortName>HNTX-III-2.2</shortName>
    </alternativeName>
</protein>
<comment type="function">
    <text evidence="1">Lethal neurotoxin. Selectively blocks tetrodotoxin-sensitive voltage-gated sodium channels (Nav). Does not affect tetrodotoxin-resistant voltage-gated sodium channels or calcium channels (By similarity).</text>
</comment>
<comment type="subunit">
    <text evidence="1">Monomer.</text>
</comment>
<comment type="subcellular location">
    <subcellularLocation>
        <location evidence="1">Secreted</location>
    </subcellularLocation>
</comment>
<comment type="tissue specificity">
    <text>Expressed by the venom gland.</text>
</comment>
<comment type="domain">
    <text evidence="1">The presence of a 'disulfide through disulfide knot' structurally defines this protein as a knottin.</text>
</comment>
<comment type="similarity">
    <text evidence="3">Belongs to the neurotoxin 10 (Hwtx-1) family. 15 (Hntx-3) subfamily.</text>
</comment>
<reference key="1">
    <citation type="journal article" date="2010" name="J. Proteome Res.">
        <title>Molecular diversification of peptide toxins from the tarantula Haplopelma hainanum (Ornithoctonus hainana) venom based on transcriptomic, peptidomic, and genomic analyses.</title>
        <authorList>
            <person name="Tang X."/>
            <person name="Zhang Y."/>
            <person name="Hu W."/>
            <person name="Xu D."/>
            <person name="Tao H."/>
            <person name="Yang X."/>
            <person name="Li Y."/>
            <person name="Jiang L."/>
            <person name="Liang S."/>
        </authorList>
    </citation>
    <scope>NUCLEOTIDE SEQUENCE [LARGE SCALE MRNA]</scope>
    <source>
        <tissue>Venom gland</tissue>
    </source>
</reference>
<accession>D2Y1Y5</accession>
<dbReference type="EMBL" id="GU292862">
    <property type="protein sequence ID" value="ADB56678.1"/>
    <property type="molecule type" value="mRNA"/>
</dbReference>
<dbReference type="SMR" id="D2Y1Y5"/>
<dbReference type="ArachnoServer" id="AS001740">
    <property type="toxin name" value="mu-theraphotoxin-Hhn2j"/>
</dbReference>
<dbReference type="GO" id="GO:0005576">
    <property type="term" value="C:extracellular region"/>
    <property type="evidence" value="ECO:0007669"/>
    <property type="project" value="UniProtKB-SubCell"/>
</dbReference>
<dbReference type="GO" id="GO:0044231">
    <property type="term" value="C:host cell presynaptic membrane"/>
    <property type="evidence" value="ECO:0007669"/>
    <property type="project" value="UniProtKB-KW"/>
</dbReference>
<dbReference type="GO" id="GO:0008200">
    <property type="term" value="F:ion channel inhibitor activity"/>
    <property type="evidence" value="ECO:0007669"/>
    <property type="project" value="InterPro"/>
</dbReference>
<dbReference type="GO" id="GO:0017080">
    <property type="term" value="F:sodium channel regulator activity"/>
    <property type="evidence" value="ECO:0007669"/>
    <property type="project" value="UniProtKB-KW"/>
</dbReference>
<dbReference type="GO" id="GO:0090729">
    <property type="term" value="F:toxin activity"/>
    <property type="evidence" value="ECO:0007669"/>
    <property type="project" value="UniProtKB-KW"/>
</dbReference>
<dbReference type="InterPro" id="IPR011696">
    <property type="entry name" value="Huwentoxin-1"/>
</dbReference>
<dbReference type="InterPro" id="IPR013140">
    <property type="entry name" value="Huwentoxin_CS1"/>
</dbReference>
<dbReference type="Pfam" id="PF07740">
    <property type="entry name" value="Toxin_12"/>
    <property type="match status" value="1"/>
</dbReference>
<dbReference type="SUPFAM" id="SSF57059">
    <property type="entry name" value="omega toxin-like"/>
    <property type="match status" value="1"/>
</dbReference>
<dbReference type="PROSITE" id="PS60021">
    <property type="entry name" value="HWTX_1"/>
    <property type="match status" value="1"/>
</dbReference>
<keyword id="KW-0027">Amidation</keyword>
<keyword id="KW-1015">Disulfide bond</keyword>
<keyword id="KW-0872">Ion channel impairing toxin</keyword>
<keyword id="KW-0960">Knottin</keyword>
<keyword id="KW-0528">Neurotoxin</keyword>
<keyword id="KW-0638">Presynaptic neurotoxin</keyword>
<keyword id="KW-0964">Secreted</keyword>
<keyword id="KW-0732">Signal</keyword>
<keyword id="KW-0800">Toxin</keyword>
<keyword id="KW-0738">Voltage-gated sodium channel impairing toxin</keyword>
<sequence>MKASMFLALAGLVLLFVVGYASESEEKEFPIELLSKIFAVDVFKGEDRGCKGFGDSCTPGKNECCPNHACSNKHKWCKVYLGK</sequence>
<name>H3B02_CYRHA</name>
<organism>
    <name type="scientific">Cyriopagopus hainanus</name>
    <name type="common">Chinese bird spider</name>
    <name type="synonym">Haplopelma hainanum</name>
    <dbReference type="NCBI Taxonomy" id="209901"/>
    <lineage>
        <taxon>Eukaryota</taxon>
        <taxon>Metazoa</taxon>
        <taxon>Ecdysozoa</taxon>
        <taxon>Arthropoda</taxon>
        <taxon>Chelicerata</taxon>
        <taxon>Arachnida</taxon>
        <taxon>Araneae</taxon>
        <taxon>Mygalomorphae</taxon>
        <taxon>Theraphosidae</taxon>
        <taxon>Haplopelma</taxon>
    </lineage>
</organism>
<evidence type="ECO:0000250" key="1"/>
<evidence type="ECO:0000255" key="2"/>
<evidence type="ECO:0000305" key="3"/>
<proteinExistence type="evidence at transcript level"/>